<accession>Q1IDJ5</accession>
<reference key="1">
    <citation type="journal article" date="2006" name="Nat. Biotechnol.">
        <title>Complete genome sequence of the entomopathogenic and metabolically versatile soil bacterium Pseudomonas entomophila.</title>
        <authorList>
            <person name="Vodovar N."/>
            <person name="Vallenet D."/>
            <person name="Cruveiller S."/>
            <person name="Rouy Z."/>
            <person name="Barbe V."/>
            <person name="Acosta C."/>
            <person name="Cattolico L."/>
            <person name="Jubin C."/>
            <person name="Lajus A."/>
            <person name="Segurens B."/>
            <person name="Vacherie B."/>
            <person name="Wincker P."/>
            <person name="Weissenbach J."/>
            <person name="Lemaitre B."/>
            <person name="Medigue C."/>
            <person name="Boccard F."/>
        </authorList>
    </citation>
    <scope>NUCLEOTIDE SEQUENCE [LARGE SCALE GENOMIC DNA]</scope>
    <source>
        <strain>L48</strain>
    </source>
</reference>
<keyword id="KW-0997">Cell inner membrane</keyword>
<keyword id="KW-1003">Cell membrane</keyword>
<keyword id="KW-0169">Cobalamin biosynthesis</keyword>
<keyword id="KW-0460">Magnesium</keyword>
<keyword id="KW-0472">Membrane</keyword>
<keyword id="KW-0808">Transferase</keyword>
<keyword id="KW-0812">Transmembrane</keyword>
<keyword id="KW-1133">Transmembrane helix</keyword>
<gene>
    <name evidence="1" type="primary">cobS</name>
    <name type="ordered locus">PSEEN1387</name>
</gene>
<protein>
    <recommendedName>
        <fullName evidence="1">Adenosylcobinamide-GDP ribazoletransferase</fullName>
        <ecNumber evidence="1">2.7.8.26</ecNumber>
    </recommendedName>
    <alternativeName>
        <fullName evidence="1">Cobalamin synthase</fullName>
    </alternativeName>
    <alternativeName>
        <fullName evidence="1">Cobalamin-5'-phosphate synthase</fullName>
    </alternativeName>
</protein>
<dbReference type="EC" id="2.7.8.26" evidence="1"/>
<dbReference type="EMBL" id="CT573326">
    <property type="protein sequence ID" value="CAK14264.1"/>
    <property type="molecule type" value="Genomic_DNA"/>
</dbReference>
<dbReference type="RefSeq" id="WP_011532680.1">
    <property type="nucleotide sequence ID" value="NC_008027.1"/>
</dbReference>
<dbReference type="STRING" id="384676.PSEEN1387"/>
<dbReference type="GeneID" id="32804651"/>
<dbReference type="KEGG" id="pen:PSEEN1387"/>
<dbReference type="eggNOG" id="COG0368">
    <property type="taxonomic scope" value="Bacteria"/>
</dbReference>
<dbReference type="HOGENOM" id="CLU_057426_3_1_6"/>
<dbReference type="OrthoDB" id="9794626at2"/>
<dbReference type="UniPathway" id="UPA00148">
    <property type="reaction ID" value="UER00238"/>
</dbReference>
<dbReference type="Proteomes" id="UP000000658">
    <property type="component" value="Chromosome"/>
</dbReference>
<dbReference type="GO" id="GO:0005886">
    <property type="term" value="C:plasma membrane"/>
    <property type="evidence" value="ECO:0007669"/>
    <property type="project" value="UniProtKB-SubCell"/>
</dbReference>
<dbReference type="GO" id="GO:0051073">
    <property type="term" value="F:adenosylcobinamide-GDP ribazoletransferase activity"/>
    <property type="evidence" value="ECO:0007669"/>
    <property type="project" value="UniProtKB-UniRule"/>
</dbReference>
<dbReference type="GO" id="GO:0008818">
    <property type="term" value="F:cobalamin 5'-phosphate synthase activity"/>
    <property type="evidence" value="ECO:0007669"/>
    <property type="project" value="UniProtKB-UniRule"/>
</dbReference>
<dbReference type="GO" id="GO:0009236">
    <property type="term" value="P:cobalamin biosynthetic process"/>
    <property type="evidence" value="ECO:0007669"/>
    <property type="project" value="UniProtKB-UniRule"/>
</dbReference>
<dbReference type="HAMAP" id="MF_00719">
    <property type="entry name" value="CobS"/>
    <property type="match status" value="1"/>
</dbReference>
<dbReference type="InterPro" id="IPR003805">
    <property type="entry name" value="CobS"/>
</dbReference>
<dbReference type="NCBIfam" id="TIGR00317">
    <property type="entry name" value="cobS"/>
    <property type="match status" value="1"/>
</dbReference>
<dbReference type="NCBIfam" id="NF001278">
    <property type="entry name" value="PRK00235.1-5"/>
    <property type="match status" value="1"/>
</dbReference>
<dbReference type="PANTHER" id="PTHR34148">
    <property type="entry name" value="ADENOSYLCOBINAMIDE-GDP RIBAZOLETRANSFERASE"/>
    <property type="match status" value="1"/>
</dbReference>
<dbReference type="PANTHER" id="PTHR34148:SF1">
    <property type="entry name" value="ADENOSYLCOBINAMIDE-GDP RIBAZOLETRANSFERASE"/>
    <property type="match status" value="1"/>
</dbReference>
<dbReference type="Pfam" id="PF02654">
    <property type="entry name" value="CobS"/>
    <property type="match status" value="1"/>
</dbReference>
<proteinExistence type="inferred from homology"/>
<evidence type="ECO:0000255" key="1">
    <source>
        <dbReference type="HAMAP-Rule" id="MF_00719"/>
    </source>
</evidence>
<feature type="chain" id="PRO_1000045790" description="Adenosylcobinamide-GDP ribazoletransferase">
    <location>
        <begin position="1"/>
        <end position="244"/>
    </location>
</feature>
<feature type="transmembrane region" description="Helical" evidence="1">
    <location>
        <begin position="31"/>
        <end position="51"/>
    </location>
</feature>
<feature type="transmembrane region" description="Helical" evidence="1">
    <location>
        <begin position="55"/>
        <end position="75"/>
    </location>
</feature>
<feature type="transmembrane region" description="Helical" evidence="1">
    <location>
        <begin position="109"/>
        <end position="129"/>
    </location>
</feature>
<feature type="transmembrane region" description="Helical" evidence="1">
    <location>
        <begin position="134"/>
        <end position="154"/>
    </location>
</feature>
<feature type="transmembrane region" description="Helical" evidence="1">
    <location>
        <begin position="188"/>
        <end position="208"/>
    </location>
</feature>
<comment type="function">
    <text evidence="1">Joins adenosylcobinamide-GDP and alpha-ribazole to generate adenosylcobalamin (Ado-cobalamin). Also synthesizes adenosylcobalamin 5'-phosphate from adenosylcobinamide-GDP and alpha-ribazole 5'-phosphate.</text>
</comment>
<comment type="catalytic activity">
    <reaction evidence="1">
        <text>alpha-ribazole + adenosylcob(III)inamide-GDP = adenosylcob(III)alamin + GMP + H(+)</text>
        <dbReference type="Rhea" id="RHEA:16049"/>
        <dbReference type="ChEBI" id="CHEBI:10329"/>
        <dbReference type="ChEBI" id="CHEBI:15378"/>
        <dbReference type="ChEBI" id="CHEBI:18408"/>
        <dbReference type="ChEBI" id="CHEBI:58115"/>
        <dbReference type="ChEBI" id="CHEBI:60487"/>
        <dbReference type="EC" id="2.7.8.26"/>
    </reaction>
</comment>
<comment type="catalytic activity">
    <reaction evidence="1">
        <text>alpha-ribazole 5'-phosphate + adenosylcob(III)inamide-GDP = adenosylcob(III)alamin 5'-phosphate + GMP + H(+)</text>
        <dbReference type="Rhea" id="RHEA:23560"/>
        <dbReference type="ChEBI" id="CHEBI:15378"/>
        <dbReference type="ChEBI" id="CHEBI:57918"/>
        <dbReference type="ChEBI" id="CHEBI:58115"/>
        <dbReference type="ChEBI" id="CHEBI:60487"/>
        <dbReference type="ChEBI" id="CHEBI:60493"/>
        <dbReference type="EC" id="2.7.8.26"/>
    </reaction>
</comment>
<comment type="cofactor">
    <cofactor evidence="1">
        <name>Mg(2+)</name>
        <dbReference type="ChEBI" id="CHEBI:18420"/>
    </cofactor>
</comment>
<comment type="pathway">
    <text evidence="1">Cofactor biosynthesis; adenosylcobalamin biosynthesis; adenosylcobalamin from cob(II)yrinate a,c-diamide: step 7/7.</text>
</comment>
<comment type="subcellular location">
    <subcellularLocation>
        <location evidence="1">Cell inner membrane</location>
        <topology evidence="1">Multi-pass membrane protein</topology>
    </subcellularLocation>
</comment>
<comment type="similarity">
    <text evidence="1">Belongs to the CobS family.</text>
</comment>
<organism>
    <name type="scientific">Pseudomonas entomophila (strain L48)</name>
    <dbReference type="NCBI Taxonomy" id="384676"/>
    <lineage>
        <taxon>Bacteria</taxon>
        <taxon>Pseudomonadati</taxon>
        <taxon>Pseudomonadota</taxon>
        <taxon>Gammaproteobacteria</taxon>
        <taxon>Pseudomonadales</taxon>
        <taxon>Pseudomonadaceae</taxon>
        <taxon>Pseudomonas</taxon>
    </lineage>
</organism>
<sequence>MLPFWIALQFLSSLPVRLPGMPTPNEMGRSLLFYPVVGLLFGLLLWLASHLLQGAPAPLHAALLLALWVLLSGALHLDGLADSADAWLGGFGDRERTLQIMKDPRSGPIAVVVLVLVLLLKFCALWVLVERGTGGWLVLAPVVGRAAMLGLFMGTPYVRKGGLGAALAEHLPRRAAGWVLLGSVLGCVVLGGSPGLWMLLLSLGVFLWLRRLMCKRLGGTTGDTAGAMVELLELAVLVGLALMV</sequence>
<name>COBS_PSEE4</name>